<evidence type="ECO:0000305" key="1"/>
<reference key="1">
    <citation type="journal article" date="1984" name="Nature">
        <title>3-A resolution structure of a protein with histone-like properties in prokaryotes.</title>
        <authorList>
            <person name="Tanaka I."/>
            <person name="Appelt K."/>
            <person name="Dijk J."/>
            <person name="White S.W."/>
            <person name="Wilson K.S."/>
        </authorList>
    </citation>
    <scope>PROTEIN SEQUENCE</scope>
</reference>
<feature type="chain" id="PRO_0000104933" description="DNA-binding protein HU">
    <location>
        <begin position="1"/>
        <end position="91"/>
    </location>
</feature>
<sequence>MNKAELITSMAEKSKLTKKDAELALKALIESVEEALEKGEKVQLVGFGTFETRERAAREGRNPRTKEVINIPATTVPVFKAGKEFKDKVNK</sequence>
<proteinExistence type="evidence at protein level"/>
<organism>
    <name type="scientific">Clostridium pasteurianum</name>
    <dbReference type="NCBI Taxonomy" id="1501"/>
    <lineage>
        <taxon>Bacteria</taxon>
        <taxon>Bacillati</taxon>
        <taxon>Bacillota</taxon>
        <taxon>Clostridia</taxon>
        <taxon>Eubacteriales</taxon>
        <taxon>Clostridiaceae</taxon>
        <taxon>Clostridium</taxon>
    </lineage>
</organism>
<name>DBH_CLOPA</name>
<accession>P05385</accession>
<comment type="function">
    <text>Histone-like DNA-binding protein which is capable of wrapping DNA to stabilize it, and thus to prevent its denaturation under extreme environmental conditions.</text>
</comment>
<comment type="similarity">
    <text evidence="1">Belongs to the bacterial histone-like protein family.</text>
</comment>
<comment type="caution">
    <text evidence="1">PubMed:6540370 shows this sequence in their paper, but the reference for the origin of the sequence is not given.</text>
</comment>
<dbReference type="SMR" id="P05385"/>
<dbReference type="GO" id="GO:0003677">
    <property type="term" value="F:DNA binding"/>
    <property type="evidence" value="ECO:0007669"/>
    <property type="project" value="UniProtKB-KW"/>
</dbReference>
<dbReference type="GO" id="GO:0030527">
    <property type="term" value="F:structural constituent of chromatin"/>
    <property type="evidence" value="ECO:0007669"/>
    <property type="project" value="InterPro"/>
</dbReference>
<dbReference type="GO" id="GO:0030261">
    <property type="term" value="P:chromosome condensation"/>
    <property type="evidence" value="ECO:0007669"/>
    <property type="project" value="UniProtKB-KW"/>
</dbReference>
<dbReference type="CDD" id="cd13831">
    <property type="entry name" value="HU"/>
    <property type="match status" value="1"/>
</dbReference>
<dbReference type="FunFam" id="4.10.520.10:FF:000001">
    <property type="entry name" value="DNA-binding protein HU"/>
    <property type="match status" value="1"/>
</dbReference>
<dbReference type="Gene3D" id="4.10.520.10">
    <property type="entry name" value="IHF-like DNA-binding proteins"/>
    <property type="match status" value="1"/>
</dbReference>
<dbReference type="InterPro" id="IPR000119">
    <property type="entry name" value="Hist_DNA-bd"/>
</dbReference>
<dbReference type="InterPro" id="IPR020816">
    <property type="entry name" value="Histone-like_DNA-bd_CS"/>
</dbReference>
<dbReference type="InterPro" id="IPR010992">
    <property type="entry name" value="IHF-like_DNA-bd_dom_sf"/>
</dbReference>
<dbReference type="PANTHER" id="PTHR33175">
    <property type="entry name" value="DNA-BINDING PROTEIN HU"/>
    <property type="match status" value="1"/>
</dbReference>
<dbReference type="PANTHER" id="PTHR33175:SF3">
    <property type="entry name" value="DNA-BINDING PROTEIN HU-BETA"/>
    <property type="match status" value="1"/>
</dbReference>
<dbReference type="Pfam" id="PF00216">
    <property type="entry name" value="Bac_DNA_binding"/>
    <property type="match status" value="1"/>
</dbReference>
<dbReference type="PRINTS" id="PR01727">
    <property type="entry name" value="DNABINDINGHU"/>
</dbReference>
<dbReference type="SMART" id="SM00411">
    <property type="entry name" value="BHL"/>
    <property type="match status" value="1"/>
</dbReference>
<dbReference type="SUPFAM" id="SSF47729">
    <property type="entry name" value="IHF-like DNA-binding proteins"/>
    <property type="match status" value="1"/>
</dbReference>
<dbReference type="PROSITE" id="PS00045">
    <property type="entry name" value="HISTONE_LIKE"/>
    <property type="match status" value="1"/>
</dbReference>
<protein>
    <recommendedName>
        <fullName>DNA-binding protein HU</fullName>
    </recommendedName>
</protein>
<gene>
    <name type="primary">hup</name>
</gene>
<keyword id="KW-0903">Direct protein sequencing</keyword>
<keyword id="KW-0226">DNA condensation</keyword>
<keyword id="KW-0238">DNA-binding</keyword>